<reference key="1">
    <citation type="journal article" date="2007" name="J. Bacteriol.">
        <title>Whole-genome analysis of the methyl tert-butyl ether-degrading beta-proteobacterium Methylibium petroleiphilum PM1.</title>
        <authorList>
            <person name="Kane S.R."/>
            <person name="Chakicherla A.Y."/>
            <person name="Chain P.S.G."/>
            <person name="Schmidt R."/>
            <person name="Shin M.W."/>
            <person name="Legler T.C."/>
            <person name="Scow K.M."/>
            <person name="Larimer F.W."/>
            <person name="Lucas S.M."/>
            <person name="Richardson P.M."/>
            <person name="Hristova K.R."/>
        </authorList>
    </citation>
    <scope>NUCLEOTIDE SEQUENCE [LARGE SCALE GENOMIC DNA]</scope>
    <source>
        <strain>ATCC BAA-1232 / LMG 22953 / PM1</strain>
    </source>
</reference>
<organism>
    <name type="scientific">Methylibium petroleiphilum (strain ATCC BAA-1232 / LMG 22953 / PM1)</name>
    <dbReference type="NCBI Taxonomy" id="420662"/>
    <lineage>
        <taxon>Bacteria</taxon>
        <taxon>Pseudomonadati</taxon>
        <taxon>Pseudomonadota</taxon>
        <taxon>Betaproteobacteria</taxon>
        <taxon>Burkholderiales</taxon>
        <taxon>Sphaerotilaceae</taxon>
        <taxon>Methylibium</taxon>
    </lineage>
</organism>
<proteinExistence type="inferred from homology"/>
<name>KDSA_METPP</name>
<protein>
    <recommendedName>
        <fullName evidence="1">2-dehydro-3-deoxyphosphooctonate aldolase</fullName>
        <ecNumber evidence="1">2.5.1.55</ecNumber>
    </recommendedName>
    <alternativeName>
        <fullName evidence="1">3-deoxy-D-manno-octulosonic acid 8-phosphate synthase</fullName>
    </alternativeName>
    <alternativeName>
        <fullName evidence="1">KDO-8-phosphate synthase</fullName>
        <shortName evidence="1">KDO 8-P synthase</shortName>
        <shortName evidence="1">KDOPS</shortName>
    </alternativeName>
    <alternativeName>
        <fullName evidence="1">Phospho-2-dehydro-3-deoxyoctonate aldolase</fullName>
    </alternativeName>
</protein>
<comment type="catalytic activity">
    <reaction evidence="1">
        <text>D-arabinose 5-phosphate + phosphoenolpyruvate + H2O = 3-deoxy-alpha-D-manno-2-octulosonate-8-phosphate + phosphate</text>
        <dbReference type="Rhea" id="RHEA:14053"/>
        <dbReference type="ChEBI" id="CHEBI:15377"/>
        <dbReference type="ChEBI" id="CHEBI:43474"/>
        <dbReference type="ChEBI" id="CHEBI:57693"/>
        <dbReference type="ChEBI" id="CHEBI:58702"/>
        <dbReference type="ChEBI" id="CHEBI:85985"/>
        <dbReference type="EC" id="2.5.1.55"/>
    </reaction>
</comment>
<comment type="pathway">
    <text evidence="1">Carbohydrate biosynthesis; 3-deoxy-D-manno-octulosonate biosynthesis; 3-deoxy-D-manno-octulosonate from D-ribulose 5-phosphate: step 2/3.</text>
</comment>
<comment type="pathway">
    <text evidence="1">Bacterial outer membrane biogenesis; lipopolysaccharide biosynthesis.</text>
</comment>
<comment type="subcellular location">
    <subcellularLocation>
        <location evidence="1">Cytoplasm</location>
    </subcellularLocation>
</comment>
<comment type="similarity">
    <text evidence="1">Belongs to the KdsA family.</text>
</comment>
<dbReference type="EC" id="2.5.1.55" evidence="1"/>
<dbReference type="EMBL" id="CP000555">
    <property type="protein sequence ID" value="ABM95800.1"/>
    <property type="molecule type" value="Genomic_DNA"/>
</dbReference>
<dbReference type="RefSeq" id="WP_011830429.1">
    <property type="nucleotide sequence ID" value="NC_008825.1"/>
</dbReference>
<dbReference type="SMR" id="A2SJR1"/>
<dbReference type="STRING" id="420662.Mpe_A2846"/>
<dbReference type="KEGG" id="mpt:Mpe_A2846"/>
<dbReference type="eggNOG" id="COG2877">
    <property type="taxonomic scope" value="Bacteria"/>
</dbReference>
<dbReference type="HOGENOM" id="CLU_036666_0_0_4"/>
<dbReference type="UniPathway" id="UPA00030"/>
<dbReference type="UniPathway" id="UPA00357">
    <property type="reaction ID" value="UER00474"/>
</dbReference>
<dbReference type="Proteomes" id="UP000000366">
    <property type="component" value="Chromosome"/>
</dbReference>
<dbReference type="GO" id="GO:0005737">
    <property type="term" value="C:cytoplasm"/>
    <property type="evidence" value="ECO:0007669"/>
    <property type="project" value="UniProtKB-SubCell"/>
</dbReference>
<dbReference type="GO" id="GO:0008676">
    <property type="term" value="F:3-deoxy-8-phosphooctulonate synthase activity"/>
    <property type="evidence" value="ECO:0007669"/>
    <property type="project" value="UniProtKB-UniRule"/>
</dbReference>
<dbReference type="GO" id="GO:0019294">
    <property type="term" value="P:keto-3-deoxy-D-manno-octulosonic acid biosynthetic process"/>
    <property type="evidence" value="ECO:0007669"/>
    <property type="project" value="UniProtKB-UniRule"/>
</dbReference>
<dbReference type="Gene3D" id="3.20.20.70">
    <property type="entry name" value="Aldolase class I"/>
    <property type="match status" value="1"/>
</dbReference>
<dbReference type="HAMAP" id="MF_00056">
    <property type="entry name" value="KDO8P_synth"/>
    <property type="match status" value="1"/>
</dbReference>
<dbReference type="InterPro" id="IPR013785">
    <property type="entry name" value="Aldolase_TIM"/>
</dbReference>
<dbReference type="InterPro" id="IPR006218">
    <property type="entry name" value="DAHP1/KDSA"/>
</dbReference>
<dbReference type="InterPro" id="IPR006269">
    <property type="entry name" value="KDO8P_synthase"/>
</dbReference>
<dbReference type="NCBIfam" id="TIGR01362">
    <property type="entry name" value="KDO8P_synth"/>
    <property type="match status" value="1"/>
</dbReference>
<dbReference type="NCBIfam" id="NF003543">
    <property type="entry name" value="PRK05198.1"/>
    <property type="match status" value="1"/>
</dbReference>
<dbReference type="PANTHER" id="PTHR21057">
    <property type="entry name" value="PHOSPHO-2-DEHYDRO-3-DEOXYHEPTONATE ALDOLASE"/>
    <property type="match status" value="1"/>
</dbReference>
<dbReference type="Pfam" id="PF00793">
    <property type="entry name" value="DAHP_synth_1"/>
    <property type="match status" value="1"/>
</dbReference>
<dbReference type="SUPFAM" id="SSF51569">
    <property type="entry name" value="Aldolase"/>
    <property type="match status" value="1"/>
</dbReference>
<feature type="chain" id="PRO_0000304458" description="2-dehydro-3-deoxyphosphooctonate aldolase">
    <location>
        <begin position="1"/>
        <end position="285"/>
    </location>
</feature>
<gene>
    <name evidence="1" type="primary">kdsA</name>
    <name type="ordered locus">Mpe_A2846</name>
</gene>
<keyword id="KW-0963">Cytoplasm</keyword>
<keyword id="KW-0448">Lipopolysaccharide biosynthesis</keyword>
<keyword id="KW-1185">Reference proteome</keyword>
<keyword id="KW-0808">Transferase</keyword>
<accession>A2SJR1</accession>
<evidence type="ECO:0000255" key="1">
    <source>
        <dbReference type="HAMAP-Rule" id="MF_00056"/>
    </source>
</evidence>
<sequence>MKLCGFDVGLDRPFFLISGPCVVESEQLQMDVAGRLKEITAALGIPFIFKSSYDKANRSSGTSFRGPGMEKGLEILAKVRRDLQVPVLTDVHSEAEIPVVAQHVDVLQTPAFLCRQTDFIRAVAQSGKPVNIKKGQFLAPGDMKNVIQKARDAAREKGLPDDVFMACERGASFGYNNLVSDMRSLAIMRETGSPVVFDATHSVQLPGGQGTSSGGQREFVPVLSRAAIAVGVAGVFMETHPDPAKALSDGPNAVPLKHMKALLEQLVSIDRVIKAQPLLENDFSC</sequence>